<accession>Q9Y2L8</accession>
<accession>A4D280</accession>
<accession>D6W5S9</accession>
<gene>
    <name type="primary">ZKSCAN5</name>
    <name type="synonym">KIAA1015</name>
    <name type="synonym">ZFP95</name>
</gene>
<keyword id="KW-0002">3D-structure</keyword>
<keyword id="KW-0238">DNA-binding</keyword>
<keyword id="KW-1017">Isopeptide bond</keyword>
<keyword id="KW-0479">Metal-binding</keyword>
<keyword id="KW-0539">Nucleus</keyword>
<keyword id="KW-0597">Phosphoprotein</keyword>
<keyword id="KW-1267">Proteomics identification</keyword>
<keyword id="KW-1185">Reference proteome</keyword>
<keyword id="KW-0677">Repeat</keyword>
<keyword id="KW-0804">Transcription</keyword>
<keyword id="KW-0805">Transcription regulation</keyword>
<keyword id="KW-0832">Ubl conjugation</keyword>
<keyword id="KW-0862">Zinc</keyword>
<keyword id="KW-0863">Zinc-finger</keyword>
<proteinExistence type="evidence at protein level"/>
<dbReference type="EMBL" id="AF170025">
    <property type="protein sequence ID" value="AAF24219.1"/>
    <property type="molecule type" value="mRNA"/>
</dbReference>
<dbReference type="EMBL" id="AB023232">
    <property type="protein sequence ID" value="BAA76859.2"/>
    <property type="status" value="ALT_INIT"/>
    <property type="molecule type" value="mRNA"/>
</dbReference>
<dbReference type="EMBL" id="CH236956">
    <property type="protein sequence ID" value="EAL23873.1"/>
    <property type="molecule type" value="Genomic_DNA"/>
</dbReference>
<dbReference type="EMBL" id="CH471091">
    <property type="protein sequence ID" value="EAW76654.1"/>
    <property type="molecule type" value="Genomic_DNA"/>
</dbReference>
<dbReference type="EMBL" id="CH471091">
    <property type="protein sequence ID" value="EAW76655.1"/>
    <property type="molecule type" value="Genomic_DNA"/>
</dbReference>
<dbReference type="EMBL" id="CH471091">
    <property type="protein sequence ID" value="EAW76656.1"/>
    <property type="molecule type" value="Genomic_DNA"/>
</dbReference>
<dbReference type="EMBL" id="CH471091">
    <property type="protein sequence ID" value="EAW76657.1"/>
    <property type="molecule type" value="Genomic_DNA"/>
</dbReference>
<dbReference type="CCDS" id="CCDS5667.1"/>
<dbReference type="RefSeq" id="NP_001305011.1">
    <property type="nucleotide sequence ID" value="NM_001318082.2"/>
</dbReference>
<dbReference type="RefSeq" id="NP_001305012.1">
    <property type="nucleotide sequence ID" value="NM_001318083.1"/>
</dbReference>
<dbReference type="RefSeq" id="NP_001305013.1">
    <property type="nucleotide sequence ID" value="NM_001318084.1"/>
</dbReference>
<dbReference type="RefSeq" id="NP_055384.1">
    <property type="nucleotide sequence ID" value="NM_014569.4"/>
</dbReference>
<dbReference type="RefSeq" id="NP_659570.1">
    <property type="nucleotide sequence ID" value="NM_145102.4"/>
</dbReference>
<dbReference type="RefSeq" id="XP_016867407.1">
    <property type="nucleotide sequence ID" value="XM_017011918.1"/>
</dbReference>
<dbReference type="RefSeq" id="XP_016867408.1">
    <property type="nucleotide sequence ID" value="XM_017011919.1"/>
</dbReference>
<dbReference type="RefSeq" id="XP_054213708.1">
    <property type="nucleotide sequence ID" value="XM_054357733.1"/>
</dbReference>
<dbReference type="PDB" id="2EM5">
    <property type="method" value="NMR"/>
    <property type="chains" value="A=768-800"/>
</dbReference>
<dbReference type="PDB" id="2EMM">
    <property type="method" value="NMR"/>
    <property type="chains" value="A=544-576"/>
</dbReference>
<dbReference type="PDB" id="2EMZ">
    <property type="method" value="NMR"/>
    <property type="chains" value="A=628-660"/>
</dbReference>
<dbReference type="PDB" id="2EN3">
    <property type="method" value="NMR"/>
    <property type="chains" value="A=796-828"/>
</dbReference>
<dbReference type="PDB" id="2EOM">
    <property type="method" value="NMR"/>
    <property type="chains" value="A=341-373"/>
</dbReference>
<dbReference type="PDB" id="2EON">
    <property type="method" value="NMR"/>
    <property type="chains" value="A=397-429"/>
</dbReference>
<dbReference type="PDB" id="2EOO">
    <property type="method" value="NMR"/>
    <property type="chains" value="A=425-457"/>
</dbReference>
<dbReference type="PDB" id="2YSO">
    <property type="method" value="NMR"/>
    <property type="chains" value="A=656-688"/>
</dbReference>
<dbReference type="PDB" id="2YTG">
    <property type="method" value="NMR"/>
    <property type="chains" value="A=369-401"/>
</dbReference>
<dbReference type="PDBsum" id="2EM5"/>
<dbReference type="PDBsum" id="2EMM"/>
<dbReference type="PDBsum" id="2EMZ"/>
<dbReference type="PDBsum" id="2EN3"/>
<dbReference type="PDBsum" id="2EOM"/>
<dbReference type="PDBsum" id="2EON"/>
<dbReference type="PDBsum" id="2EOO"/>
<dbReference type="PDBsum" id="2YSO"/>
<dbReference type="PDBsum" id="2YTG"/>
<dbReference type="SMR" id="Q9Y2L8"/>
<dbReference type="BioGRID" id="117182">
    <property type="interactions" value="16"/>
</dbReference>
<dbReference type="FunCoup" id="Q9Y2L8">
    <property type="interactions" value="1469"/>
</dbReference>
<dbReference type="IntAct" id="Q9Y2L8">
    <property type="interactions" value="22"/>
</dbReference>
<dbReference type="MINT" id="Q9Y2L8"/>
<dbReference type="STRING" id="9606.ENSP00000377725"/>
<dbReference type="GlyGen" id="Q9Y2L8">
    <property type="glycosylation" value="1 site"/>
</dbReference>
<dbReference type="iPTMnet" id="Q9Y2L8"/>
<dbReference type="PhosphoSitePlus" id="Q9Y2L8"/>
<dbReference type="BioMuta" id="ZKSCAN5"/>
<dbReference type="DMDM" id="11136143"/>
<dbReference type="jPOST" id="Q9Y2L8"/>
<dbReference type="MassIVE" id="Q9Y2L8"/>
<dbReference type="PaxDb" id="9606-ENSP00000377725"/>
<dbReference type="PeptideAtlas" id="Q9Y2L8"/>
<dbReference type="ProteomicsDB" id="85838"/>
<dbReference type="ABCD" id="Q9Y2L8">
    <property type="antibodies" value="4 sequenced antibodies"/>
</dbReference>
<dbReference type="Antibodypedia" id="30392">
    <property type="antibodies" value="119 antibodies from 21 providers"/>
</dbReference>
<dbReference type="DNASU" id="23660"/>
<dbReference type="Ensembl" id="ENST00000326775.10">
    <property type="protein sequence ID" value="ENSP00000322872.5"/>
    <property type="gene ID" value="ENSG00000196652.12"/>
</dbReference>
<dbReference type="Ensembl" id="ENST00000394170.6">
    <property type="protein sequence ID" value="ENSP00000377725.2"/>
    <property type="gene ID" value="ENSG00000196652.12"/>
</dbReference>
<dbReference type="Ensembl" id="ENST00000451158.5">
    <property type="protein sequence ID" value="ENSP00000392104.1"/>
    <property type="gene ID" value="ENSG00000196652.12"/>
</dbReference>
<dbReference type="GeneID" id="23660"/>
<dbReference type="KEGG" id="hsa:23660"/>
<dbReference type="MANE-Select" id="ENST00000326775.10">
    <property type="protein sequence ID" value="ENSP00000322872.5"/>
    <property type="RefSeq nucleotide sequence ID" value="NM_145102.4"/>
    <property type="RefSeq protein sequence ID" value="NP_659570.1"/>
</dbReference>
<dbReference type="UCSC" id="uc003uqv.4">
    <property type="organism name" value="human"/>
</dbReference>
<dbReference type="AGR" id="HGNC:12867"/>
<dbReference type="CTD" id="23660"/>
<dbReference type="DisGeNET" id="23660"/>
<dbReference type="GeneCards" id="ZKSCAN5"/>
<dbReference type="HGNC" id="HGNC:12867">
    <property type="gene designation" value="ZKSCAN5"/>
</dbReference>
<dbReference type="HPA" id="ENSG00000196652">
    <property type="expression patterns" value="Low tissue specificity"/>
</dbReference>
<dbReference type="MIM" id="611272">
    <property type="type" value="gene"/>
</dbReference>
<dbReference type="neXtProt" id="NX_Q9Y2L8"/>
<dbReference type="OpenTargets" id="ENSG00000196652"/>
<dbReference type="PharmGKB" id="PA162409785"/>
<dbReference type="VEuPathDB" id="HostDB:ENSG00000196652"/>
<dbReference type="eggNOG" id="KOG1721">
    <property type="taxonomic scope" value="Eukaryota"/>
</dbReference>
<dbReference type="GeneTree" id="ENSGT00940000162299"/>
<dbReference type="HOGENOM" id="CLU_002678_23_3_1"/>
<dbReference type="InParanoid" id="Q9Y2L8"/>
<dbReference type="OMA" id="KSQRCND"/>
<dbReference type="OrthoDB" id="6077919at2759"/>
<dbReference type="PAN-GO" id="Q9Y2L8">
    <property type="GO annotations" value="4 GO annotations based on evolutionary models"/>
</dbReference>
<dbReference type="PhylomeDB" id="Q9Y2L8"/>
<dbReference type="TreeFam" id="TF338146"/>
<dbReference type="PathwayCommons" id="Q9Y2L8"/>
<dbReference type="Reactome" id="R-HSA-212436">
    <property type="pathway name" value="Generic Transcription Pathway"/>
</dbReference>
<dbReference type="SignaLink" id="Q9Y2L8"/>
<dbReference type="BioGRID-ORCS" id="23660">
    <property type="hits" value="27 hits in 1179 CRISPR screens"/>
</dbReference>
<dbReference type="ChiTaRS" id="ZKSCAN5">
    <property type="organism name" value="human"/>
</dbReference>
<dbReference type="EvolutionaryTrace" id="Q9Y2L8"/>
<dbReference type="GeneWiki" id="ZKSCAN5"/>
<dbReference type="GenomeRNAi" id="23660"/>
<dbReference type="Pharos" id="Q9Y2L8">
    <property type="development level" value="Tbio"/>
</dbReference>
<dbReference type="PRO" id="PR:Q9Y2L8"/>
<dbReference type="Proteomes" id="UP000005640">
    <property type="component" value="Chromosome 7"/>
</dbReference>
<dbReference type="RNAct" id="Q9Y2L8">
    <property type="molecule type" value="protein"/>
</dbReference>
<dbReference type="Bgee" id="ENSG00000196652">
    <property type="expression patterns" value="Expressed in tendon of biceps brachii and 153 other cell types or tissues"/>
</dbReference>
<dbReference type="ExpressionAtlas" id="Q9Y2L8">
    <property type="expression patterns" value="baseline and differential"/>
</dbReference>
<dbReference type="GO" id="GO:0005634">
    <property type="term" value="C:nucleus"/>
    <property type="evidence" value="ECO:0000318"/>
    <property type="project" value="GO_Central"/>
</dbReference>
<dbReference type="GO" id="GO:0003700">
    <property type="term" value="F:DNA-binding transcription factor activity"/>
    <property type="evidence" value="ECO:0000303"/>
    <property type="project" value="UniProtKB"/>
</dbReference>
<dbReference type="GO" id="GO:0000981">
    <property type="term" value="F:DNA-binding transcription factor activity, RNA polymerase II-specific"/>
    <property type="evidence" value="ECO:0000318"/>
    <property type="project" value="GO_Central"/>
</dbReference>
<dbReference type="GO" id="GO:0000978">
    <property type="term" value="F:RNA polymerase II cis-regulatory region sequence-specific DNA binding"/>
    <property type="evidence" value="ECO:0000318"/>
    <property type="project" value="GO_Central"/>
</dbReference>
<dbReference type="GO" id="GO:0008270">
    <property type="term" value="F:zinc ion binding"/>
    <property type="evidence" value="ECO:0000303"/>
    <property type="project" value="UniProtKB"/>
</dbReference>
<dbReference type="GO" id="GO:0006355">
    <property type="term" value="P:regulation of DNA-templated transcription"/>
    <property type="evidence" value="ECO:0000303"/>
    <property type="project" value="UniProtKB"/>
</dbReference>
<dbReference type="GO" id="GO:0006357">
    <property type="term" value="P:regulation of transcription by RNA polymerase II"/>
    <property type="evidence" value="ECO:0000318"/>
    <property type="project" value="GO_Central"/>
</dbReference>
<dbReference type="CDD" id="cd07765">
    <property type="entry name" value="KRAB_A-box"/>
    <property type="match status" value="1"/>
</dbReference>
<dbReference type="CDD" id="cd07936">
    <property type="entry name" value="SCAN"/>
    <property type="match status" value="1"/>
</dbReference>
<dbReference type="FunFam" id="3.30.160.60:FF:000295">
    <property type="entry name" value="zinc finger protein 19"/>
    <property type="match status" value="1"/>
</dbReference>
<dbReference type="FunFam" id="1.10.4020.10:FF:000001">
    <property type="entry name" value="zinc finger protein 263 isoform X1"/>
    <property type="match status" value="1"/>
</dbReference>
<dbReference type="FunFam" id="3.30.160.60:FF:001248">
    <property type="entry name" value="zinc finger protein 333 isoform X2"/>
    <property type="match status" value="1"/>
</dbReference>
<dbReference type="FunFam" id="3.30.160.60:FF:000690">
    <property type="entry name" value="Zinc finger protein 354C"/>
    <property type="match status" value="1"/>
</dbReference>
<dbReference type="FunFam" id="3.30.160.60:FF:000016">
    <property type="entry name" value="zinc finger protein 37 homolog"/>
    <property type="match status" value="2"/>
</dbReference>
<dbReference type="FunFam" id="3.30.160.60:FF:001898">
    <property type="entry name" value="Zinc finger protein with KRAB and SCAN domains 5"/>
    <property type="match status" value="1"/>
</dbReference>
<dbReference type="FunFam" id="3.30.160.60:FF:000509">
    <property type="entry name" value="zinc finger protein with KRAB and SCAN domains 5"/>
    <property type="match status" value="2"/>
</dbReference>
<dbReference type="FunFam" id="3.30.160.60:FF:000642">
    <property type="entry name" value="Zinc finger with KRAB and SCAN domains 2"/>
    <property type="match status" value="2"/>
</dbReference>
<dbReference type="FunFam" id="3.30.160.60:FF:001643">
    <property type="entry name" value="Zinc finger with KRAB and SCAN domains 5"/>
    <property type="match status" value="1"/>
</dbReference>
<dbReference type="Gene3D" id="6.10.140.140">
    <property type="match status" value="1"/>
</dbReference>
<dbReference type="Gene3D" id="3.30.160.60">
    <property type="entry name" value="Classic Zinc Finger"/>
    <property type="match status" value="13"/>
</dbReference>
<dbReference type="Gene3D" id="1.10.4020.10">
    <property type="entry name" value="DNA breaking-rejoining enzymes"/>
    <property type="match status" value="1"/>
</dbReference>
<dbReference type="InterPro" id="IPR001909">
    <property type="entry name" value="KRAB"/>
</dbReference>
<dbReference type="InterPro" id="IPR036051">
    <property type="entry name" value="KRAB_dom_sf"/>
</dbReference>
<dbReference type="InterPro" id="IPR003309">
    <property type="entry name" value="SCAN_dom"/>
</dbReference>
<dbReference type="InterPro" id="IPR038269">
    <property type="entry name" value="SCAN_sf"/>
</dbReference>
<dbReference type="InterPro" id="IPR036236">
    <property type="entry name" value="Znf_C2H2_sf"/>
</dbReference>
<dbReference type="InterPro" id="IPR013087">
    <property type="entry name" value="Znf_C2H2_type"/>
</dbReference>
<dbReference type="PANTHER" id="PTHR24393">
    <property type="entry name" value="ZINC FINGER PROTEIN"/>
    <property type="match status" value="1"/>
</dbReference>
<dbReference type="PANTHER" id="PTHR24393:SF100">
    <property type="entry name" value="ZINC FINGER PROTEIN-RELATED"/>
    <property type="match status" value="1"/>
</dbReference>
<dbReference type="Pfam" id="PF01352">
    <property type="entry name" value="KRAB"/>
    <property type="match status" value="1"/>
</dbReference>
<dbReference type="Pfam" id="PF02023">
    <property type="entry name" value="SCAN"/>
    <property type="match status" value="1"/>
</dbReference>
<dbReference type="Pfam" id="PF00096">
    <property type="entry name" value="zf-C2H2"/>
    <property type="match status" value="10"/>
</dbReference>
<dbReference type="SMART" id="SM00349">
    <property type="entry name" value="KRAB"/>
    <property type="match status" value="1"/>
</dbReference>
<dbReference type="SMART" id="SM00431">
    <property type="entry name" value="SCAN"/>
    <property type="match status" value="1"/>
</dbReference>
<dbReference type="SMART" id="SM00355">
    <property type="entry name" value="ZnF_C2H2"/>
    <property type="match status" value="12"/>
</dbReference>
<dbReference type="SUPFAM" id="SSF57667">
    <property type="entry name" value="beta-beta-alpha zinc fingers"/>
    <property type="match status" value="7"/>
</dbReference>
<dbReference type="SUPFAM" id="SSF109640">
    <property type="entry name" value="KRAB domain (Kruppel-associated box)"/>
    <property type="match status" value="1"/>
</dbReference>
<dbReference type="SUPFAM" id="SSF47353">
    <property type="entry name" value="Retrovirus capsid dimerization domain-like"/>
    <property type="match status" value="1"/>
</dbReference>
<dbReference type="PROSITE" id="PS50805">
    <property type="entry name" value="KRAB"/>
    <property type="match status" value="1"/>
</dbReference>
<dbReference type="PROSITE" id="PS50804">
    <property type="entry name" value="SCAN_BOX"/>
    <property type="match status" value="1"/>
</dbReference>
<dbReference type="PROSITE" id="PS00028">
    <property type="entry name" value="ZINC_FINGER_C2H2_1"/>
    <property type="match status" value="12"/>
</dbReference>
<dbReference type="PROSITE" id="PS50157">
    <property type="entry name" value="ZINC_FINGER_C2H2_2"/>
    <property type="match status" value="13"/>
</dbReference>
<feature type="chain" id="PRO_0000047315" description="Zinc finger protein with KRAB and SCAN domains 5">
    <location>
        <begin position="1"/>
        <end position="839"/>
    </location>
</feature>
<feature type="domain" description="SCAN box" evidence="3">
    <location>
        <begin position="51"/>
        <end position="132"/>
    </location>
</feature>
<feature type="domain" description="KRAB" evidence="2">
    <location>
        <begin position="218"/>
        <end position="291"/>
    </location>
</feature>
<feature type="zinc finger region" description="C2H2-type 1" evidence="1">
    <location>
        <begin position="346"/>
        <end position="368"/>
    </location>
</feature>
<feature type="zinc finger region" description="C2H2-type 2" evidence="1">
    <location>
        <begin position="374"/>
        <end position="396"/>
    </location>
</feature>
<feature type="zinc finger region" description="C2H2-type 3" evidence="1">
    <location>
        <begin position="402"/>
        <end position="424"/>
    </location>
</feature>
<feature type="zinc finger region" description="C2H2-type 4" evidence="1">
    <location>
        <begin position="430"/>
        <end position="452"/>
    </location>
</feature>
<feature type="zinc finger region" description="C2H2-type 5" evidence="1">
    <location>
        <begin position="549"/>
        <end position="571"/>
    </location>
</feature>
<feature type="zinc finger region" description="C2H2-type 6" evidence="1">
    <location>
        <begin position="577"/>
        <end position="599"/>
    </location>
</feature>
<feature type="zinc finger region" description="C2H2-type 7" evidence="1">
    <location>
        <begin position="605"/>
        <end position="627"/>
    </location>
</feature>
<feature type="zinc finger region" description="C2H2-type 8" evidence="1">
    <location>
        <begin position="633"/>
        <end position="655"/>
    </location>
</feature>
<feature type="zinc finger region" description="C2H2-type 9" evidence="1">
    <location>
        <begin position="661"/>
        <end position="683"/>
    </location>
</feature>
<feature type="zinc finger region" description="C2H2-type 10" evidence="1">
    <location>
        <begin position="717"/>
        <end position="739"/>
    </location>
</feature>
<feature type="zinc finger region" description="C2H2-type 11; atypical" evidence="1">
    <location>
        <begin position="745"/>
        <end position="763"/>
    </location>
</feature>
<feature type="zinc finger region" description="C2H2-type 12" evidence="1">
    <location>
        <begin position="773"/>
        <end position="795"/>
    </location>
</feature>
<feature type="zinc finger region" description="C2H2-type 13" evidence="1">
    <location>
        <begin position="801"/>
        <end position="823"/>
    </location>
</feature>
<feature type="modified residue" description="Phosphoserine" evidence="5">
    <location>
        <position position="335"/>
    </location>
</feature>
<feature type="cross-link" description="Glycyl lysine isopeptide (Lys-Gly) (interchain with G-Cter in SUMO2)" evidence="6">
    <location>
        <position position="216"/>
    </location>
</feature>
<feature type="cross-link" description="Glycyl lysine isopeptide (Lys-Gly) (interchain with G-Cter in SUMO2)" evidence="6">
    <location>
        <position position="248"/>
    </location>
</feature>
<feature type="cross-link" description="Glycyl lysine isopeptide (Lys-Gly) (interchain with G-Cter in SUMO2)" evidence="6">
    <location>
        <position position="270"/>
    </location>
</feature>
<feature type="cross-link" description="Glycyl lysine isopeptide (Lys-Gly) (interchain with G-Cter in SUMO2)" evidence="6">
    <location>
        <position position="303"/>
    </location>
</feature>
<feature type="cross-link" description="Glycyl lysine isopeptide (Lys-Gly) (interchain with G-Cter in SUMO2)" evidence="6">
    <location>
        <position position="317"/>
    </location>
</feature>
<feature type="cross-link" description="Glycyl lysine isopeptide (Lys-Gly) (interchain with G-Cter in SUMO2)" evidence="6">
    <location>
        <position position="509"/>
    </location>
</feature>
<feature type="cross-link" description="Glycyl lysine isopeptide (Lys-Gly) (interchain with G-Cter in SUMO2)" evidence="6">
    <location>
        <position position="513"/>
    </location>
</feature>
<feature type="cross-link" description="Glycyl lysine isopeptide (Lys-Gly) (interchain with G-Cter in SUMO2)" evidence="6">
    <location>
        <position position="709"/>
    </location>
</feature>
<feature type="cross-link" description="Glycyl lysine isopeptide (Lys-Gly) (interchain with G-Cter in SUMO2)" evidence="6">
    <location>
        <position position="785"/>
    </location>
</feature>
<feature type="strand" evidence="11">
    <location>
        <begin position="349"/>
        <end position="351"/>
    </location>
</feature>
<feature type="helix" evidence="11">
    <location>
        <begin position="358"/>
        <end position="368"/>
    </location>
</feature>
<feature type="strand" evidence="15">
    <location>
        <begin position="373"/>
        <end position="375"/>
    </location>
</feature>
<feature type="turn" evidence="15">
    <location>
        <begin position="377"/>
        <end position="379"/>
    </location>
</feature>
<feature type="strand" evidence="15">
    <location>
        <begin position="382"/>
        <end position="386"/>
    </location>
</feature>
<feature type="helix" evidence="15">
    <location>
        <begin position="387"/>
        <end position="390"/>
    </location>
</feature>
<feature type="helix" evidence="15">
    <location>
        <begin position="393"/>
        <end position="396"/>
    </location>
</feature>
<feature type="strand" evidence="12">
    <location>
        <begin position="405"/>
        <end position="407"/>
    </location>
</feature>
<feature type="helix" evidence="12">
    <location>
        <begin position="414"/>
        <end position="420"/>
    </location>
</feature>
<feature type="turn" evidence="12">
    <location>
        <begin position="421"/>
        <end position="425"/>
    </location>
</feature>
<feature type="strand" evidence="13">
    <location>
        <begin position="433"/>
        <end position="435"/>
    </location>
</feature>
<feature type="strand" evidence="13">
    <location>
        <begin position="438"/>
        <end position="441"/>
    </location>
</feature>
<feature type="helix" evidence="13">
    <location>
        <begin position="442"/>
        <end position="453"/>
    </location>
</feature>
<feature type="strand" evidence="8">
    <location>
        <begin position="548"/>
        <end position="550"/>
    </location>
</feature>
<feature type="strand" evidence="8">
    <location>
        <begin position="552"/>
        <end position="554"/>
    </location>
</feature>
<feature type="strand" evidence="8">
    <location>
        <begin position="557"/>
        <end position="560"/>
    </location>
</feature>
<feature type="helix" evidence="8">
    <location>
        <begin position="561"/>
        <end position="571"/>
    </location>
</feature>
<feature type="strand" evidence="9">
    <location>
        <begin position="636"/>
        <end position="638"/>
    </location>
</feature>
<feature type="helix" evidence="9">
    <location>
        <begin position="645"/>
        <end position="657"/>
    </location>
</feature>
<feature type="turn" evidence="14">
    <location>
        <begin position="664"/>
        <end position="666"/>
    </location>
</feature>
<feature type="strand" evidence="14">
    <location>
        <begin position="669"/>
        <end position="672"/>
    </location>
</feature>
<feature type="helix" evidence="14">
    <location>
        <begin position="673"/>
        <end position="683"/>
    </location>
</feature>
<feature type="strand" evidence="7">
    <location>
        <begin position="772"/>
        <end position="774"/>
    </location>
</feature>
<feature type="strand" evidence="7">
    <location>
        <begin position="776"/>
        <end position="778"/>
    </location>
</feature>
<feature type="strand" evidence="7">
    <location>
        <begin position="781"/>
        <end position="784"/>
    </location>
</feature>
<feature type="helix" evidence="7">
    <location>
        <begin position="785"/>
        <end position="792"/>
    </location>
</feature>
<feature type="turn" evidence="7">
    <location>
        <begin position="793"/>
        <end position="795"/>
    </location>
</feature>
<feature type="strand" evidence="10">
    <location>
        <begin position="800"/>
        <end position="802"/>
    </location>
</feature>
<feature type="strand" evidence="10">
    <location>
        <begin position="804"/>
        <end position="806"/>
    </location>
</feature>
<feature type="strand" evidence="10">
    <location>
        <begin position="809"/>
        <end position="813"/>
    </location>
</feature>
<feature type="helix" evidence="10">
    <location>
        <begin position="814"/>
        <end position="825"/>
    </location>
</feature>
<name>ZKSC5_HUMAN</name>
<reference key="1">
    <citation type="journal article" date="1999" name="Genomics">
        <title>Isolation, characterization, and mapping of a zinc finger gene, ZFP95, containing both a SCAN box and an alternatively spliced KRAB A domain.</title>
        <authorList>
            <person name="Dreyer S.D."/>
            <person name="Zheng Q."/>
            <person name="Zabel B."/>
            <person name="Winterpacht A."/>
            <person name="Lee B."/>
        </authorList>
    </citation>
    <scope>NUCLEOTIDE SEQUENCE [MRNA]</scope>
</reference>
<reference key="2">
    <citation type="journal article" date="1999" name="DNA Res.">
        <title>Prediction of the coding sequences of unidentified human genes. XIII. The complete sequences of 100 new cDNA clones from brain which code for large proteins in vitro.</title>
        <authorList>
            <person name="Nagase T."/>
            <person name="Ishikawa K."/>
            <person name="Suyama M."/>
            <person name="Kikuno R."/>
            <person name="Hirosawa M."/>
            <person name="Miyajima N."/>
            <person name="Tanaka A."/>
            <person name="Kotani H."/>
            <person name="Nomura N."/>
            <person name="Ohara O."/>
        </authorList>
    </citation>
    <scope>NUCLEOTIDE SEQUENCE [LARGE SCALE MRNA]</scope>
    <source>
        <tissue>Brain</tissue>
    </source>
</reference>
<reference key="3">
    <citation type="journal article" date="2003" name="Science">
        <title>Human chromosome 7: DNA sequence and biology.</title>
        <authorList>
            <person name="Scherer S.W."/>
            <person name="Cheung J."/>
            <person name="MacDonald J.R."/>
            <person name="Osborne L.R."/>
            <person name="Nakabayashi K."/>
            <person name="Herbrick J.-A."/>
            <person name="Carson A.R."/>
            <person name="Parker-Katiraee L."/>
            <person name="Skaug J."/>
            <person name="Khaja R."/>
            <person name="Zhang J."/>
            <person name="Hudek A.K."/>
            <person name="Li M."/>
            <person name="Haddad M."/>
            <person name="Duggan G.E."/>
            <person name="Fernandez B.A."/>
            <person name="Kanematsu E."/>
            <person name="Gentles S."/>
            <person name="Christopoulos C.C."/>
            <person name="Choufani S."/>
            <person name="Kwasnicka D."/>
            <person name="Zheng X.H."/>
            <person name="Lai Z."/>
            <person name="Nusskern D.R."/>
            <person name="Zhang Q."/>
            <person name="Gu Z."/>
            <person name="Lu F."/>
            <person name="Zeesman S."/>
            <person name="Nowaczyk M.J."/>
            <person name="Teshima I."/>
            <person name="Chitayat D."/>
            <person name="Shuman C."/>
            <person name="Weksberg R."/>
            <person name="Zackai E.H."/>
            <person name="Grebe T.A."/>
            <person name="Cox S.R."/>
            <person name="Kirkpatrick S.J."/>
            <person name="Rahman N."/>
            <person name="Friedman J.M."/>
            <person name="Heng H.H.Q."/>
            <person name="Pelicci P.G."/>
            <person name="Lo-Coco F."/>
            <person name="Belloni E."/>
            <person name="Shaffer L.G."/>
            <person name="Pober B."/>
            <person name="Morton C.C."/>
            <person name="Gusella J.F."/>
            <person name="Bruns G.A.P."/>
            <person name="Korf B.R."/>
            <person name="Quade B.J."/>
            <person name="Ligon A.H."/>
            <person name="Ferguson H."/>
            <person name="Higgins A.W."/>
            <person name="Leach N.T."/>
            <person name="Herrick S.R."/>
            <person name="Lemyre E."/>
            <person name="Farra C.G."/>
            <person name="Kim H.-G."/>
            <person name="Summers A.M."/>
            <person name="Gripp K.W."/>
            <person name="Roberts W."/>
            <person name="Szatmari P."/>
            <person name="Winsor E.J.T."/>
            <person name="Grzeschik K.-H."/>
            <person name="Teebi A."/>
            <person name="Minassian B.A."/>
            <person name="Kere J."/>
            <person name="Armengol L."/>
            <person name="Pujana M.A."/>
            <person name="Estivill X."/>
            <person name="Wilson M.D."/>
            <person name="Koop B.F."/>
            <person name="Tosi S."/>
            <person name="Moore G.E."/>
            <person name="Boright A.P."/>
            <person name="Zlotorynski E."/>
            <person name="Kerem B."/>
            <person name="Kroisel P.M."/>
            <person name="Petek E."/>
            <person name="Oscier D.G."/>
            <person name="Mould S.J."/>
            <person name="Doehner H."/>
            <person name="Doehner K."/>
            <person name="Rommens J.M."/>
            <person name="Vincent J.B."/>
            <person name="Venter J.C."/>
            <person name="Li P.W."/>
            <person name="Mural R.J."/>
            <person name="Adams M.D."/>
            <person name="Tsui L.-C."/>
        </authorList>
    </citation>
    <scope>NUCLEOTIDE SEQUENCE [LARGE SCALE GENOMIC DNA]</scope>
</reference>
<reference key="4">
    <citation type="submission" date="2005-09" db="EMBL/GenBank/DDBJ databases">
        <authorList>
            <person name="Mural R.J."/>
            <person name="Istrail S."/>
            <person name="Sutton G.G."/>
            <person name="Florea L."/>
            <person name="Halpern A.L."/>
            <person name="Mobarry C.M."/>
            <person name="Lippert R."/>
            <person name="Walenz B."/>
            <person name="Shatkay H."/>
            <person name="Dew I."/>
            <person name="Miller J.R."/>
            <person name="Flanigan M.J."/>
            <person name="Edwards N.J."/>
            <person name="Bolanos R."/>
            <person name="Fasulo D."/>
            <person name="Halldorsson B.V."/>
            <person name="Hannenhalli S."/>
            <person name="Turner R."/>
            <person name="Yooseph S."/>
            <person name="Lu F."/>
            <person name="Nusskern D.R."/>
            <person name="Shue B.C."/>
            <person name="Zheng X.H."/>
            <person name="Zhong F."/>
            <person name="Delcher A.L."/>
            <person name="Huson D.H."/>
            <person name="Kravitz S.A."/>
            <person name="Mouchard L."/>
            <person name="Reinert K."/>
            <person name="Remington K.A."/>
            <person name="Clark A.G."/>
            <person name="Waterman M.S."/>
            <person name="Eichler E.E."/>
            <person name="Adams M.D."/>
            <person name="Hunkapiller M.W."/>
            <person name="Myers E.W."/>
            <person name="Venter J.C."/>
        </authorList>
    </citation>
    <scope>NUCLEOTIDE SEQUENCE [LARGE SCALE GENOMIC DNA]</scope>
</reference>
<reference key="5">
    <citation type="journal article" date="2013" name="J. Proteome Res.">
        <title>Toward a comprehensive characterization of a human cancer cell phosphoproteome.</title>
        <authorList>
            <person name="Zhou H."/>
            <person name="Di Palma S."/>
            <person name="Preisinger C."/>
            <person name="Peng M."/>
            <person name="Polat A.N."/>
            <person name="Heck A.J."/>
            <person name="Mohammed S."/>
        </authorList>
    </citation>
    <scope>PHOSPHORYLATION [LARGE SCALE ANALYSIS] AT SER-335</scope>
    <scope>IDENTIFICATION BY MASS SPECTROMETRY [LARGE SCALE ANALYSIS]</scope>
    <source>
        <tissue>Cervix carcinoma</tissue>
        <tissue>Erythroleukemia</tissue>
    </source>
</reference>
<reference key="6">
    <citation type="journal article" date="2017" name="Nat. Struct. Mol. Biol.">
        <title>Site-specific mapping of the human SUMO proteome reveals co-modification with phosphorylation.</title>
        <authorList>
            <person name="Hendriks I.A."/>
            <person name="Lyon D."/>
            <person name="Young C."/>
            <person name="Jensen L.J."/>
            <person name="Vertegaal A.C."/>
            <person name="Nielsen M.L."/>
        </authorList>
    </citation>
    <scope>SUMOYLATION [LARGE SCALE ANALYSIS] AT LYS-216; LYS-248; LYS-270; LYS-303; LYS-317; LYS-509; LYS-513; LYS-709 AND LYS-785</scope>
    <scope>IDENTIFICATION BY MASS SPECTROMETRY [LARGE SCALE ANALYSIS]</scope>
</reference>
<reference key="7">
    <citation type="submission" date="2007-10" db="PDB data bank">
        <title>Solution structure of the C2H2 type zinc finger region of human zinc finger protein 95 homolog.</title>
        <authorList>
            <consortium name="RIKEN structural genomics initiative (RSGI)"/>
        </authorList>
    </citation>
    <scope>STRUCTURE BY NMR OF 369-828</scope>
</reference>
<comment type="function">
    <text>May be involved in transcriptional regulation.</text>
</comment>
<comment type="interaction">
    <interactant intactId="EBI-2876965">
        <id>Q9Y2L8</id>
    </interactant>
    <interactant intactId="EBI-702390">
        <id>Q9UBB4</id>
        <label>ATXN10</label>
    </interactant>
    <organismsDiffer>false</organismsDiffer>
    <experiments>3</experiments>
</comment>
<comment type="interaction">
    <interactant intactId="EBI-2876965">
        <id>Q9Y2L8</id>
    </interactant>
    <interactant intactId="EBI-744302">
        <id>P14136</id>
        <label>GFAP</label>
    </interactant>
    <organismsDiffer>false</organismsDiffer>
    <experiments>3</experiments>
</comment>
<comment type="interaction">
    <interactant intactId="EBI-2876965">
        <id>Q9Y2L8</id>
    </interactant>
    <interactant intactId="EBI-1955541">
        <id>Q53GS7</id>
        <label>GLE1</label>
    </interactant>
    <organismsDiffer>false</organismsDiffer>
    <experiments>3</experiments>
</comment>
<comment type="interaction">
    <interactant intactId="EBI-2876965">
        <id>Q9Y2L8</id>
    </interactant>
    <interactant intactId="EBI-5235340">
        <id>Q7Z699</id>
        <label>SPRED1</label>
    </interactant>
    <organismsDiffer>false</organismsDiffer>
    <experiments>3</experiments>
</comment>
<comment type="interaction">
    <interactant intactId="EBI-2876965">
        <id>Q9Y2L8</id>
    </interactant>
    <interactant intactId="EBI-349968">
        <id>O43463</id>
        <label>SUV39H1</label>
    </interactant>
    <organismsDiffer>false</organismsDiffer>
    <experiments>2</experiments>
</comment>
<comment type="subcellular location">
    <subcellularLocation>
        <location evidence="3">Nucleus</location>
    </subcellularLocation>
</comment>
<comment type="similarity">
    <text evidence="4">Belongs to the krueppel C2H2-type zinc-finger protein family.</text>
</comment>
<comment type="sequence caution" evidence="4">
    <conflict type="erroneous initiation">
        <sequence resource="EMBL-CDS" id="BAA76859"/>
    </conflict>
</comment>
<evidence type="ECO:0000255" key="1">
    <source>
        <dbReference type="PROSITE-ProRule" id="PRU00042"/>
    </source>
</evidence>
<evidence type="ECO:0000255" key="2">
    <source>
        <dbReference type="PROSITE-ProRule" id="PRU00119"/>
    </source>
</evidence>
<evidence type="ECO:0000255" key="3">
    <source>
        <dbReference type="PROSITE-ProRule" id="PRU00187"/>
    </source>
</evidence>
<evidence type="ECO:0000305" key="4"/>
<evidence type="ECO:0007744" key="5">
    <source>
    </source>
</evidence>
<evidence type="ECO:0007744" key="6">
    <source>
    </source>
</evidence>
<evidence type="ECO:0007829" key="7">
    <source>
        <dbReference type="PDB" id="2EM5"/>
    </source>
</evidence>
<evidence type="ECO:0007829" key="8">
    <source>
        <dbReference type="PDB" id="2EMM"/>
    </source>
</evidence>
<evidence type="ECO:0007829" key="9">
    <source>
        <dbReference type="PDB" id="2EMZ"/>
    </source>
</evidence>
<evidence type="ECO:0007829" key="10">
    <source>
        <dbReference type="PDB" id="2EN3"/>
    </source>
</evidence>
<evidence type="ECO:0007829" key="11">
    <source>
        <dbReference type="PDB" id="2EOM"/>
    </source>
</evidence>
<evidence type="ECO:0007829" key="12">
    <source>
        <dbReference type="PDB" id="2EON"/>
    </source>
</evidence>
<evidence type="ECO:0007829" key="13">
    <source>
        <dbReference type="PDB" id="2EOO"/>
    </source>
</evidence>
<evidence type="ECO:0007829" key="14">
    <source>
        <dbReference type="PDB" id="2YSO"/>
    </source>
</evidence>
<evidence type="ECO:0007829" key="15">
    <source>
        <dbReference type="PDB" id="2YTG"/>
    </source>
</evidence>
<sequence length="839" mass="96903">MIMTESREVIDLDPPAETSQEQEDLFIVKVEEEDCTWMQEYNPPTFETFYQRFRHFQYHEASGPREALSQLRVLCCEWLRPELHTKEQILELLVLEQFLTILPEEFQPWVREHHPESGEEAVAVIENIQRELEERRQQIVACPDVLPRKMATPGAVQESCSPHPLTVDTQPEQAPQKPRLLEENALPVLQVPSLPLKDSQELTASLLSTGSQKLVKIEEVADVAVSFILEEWGHLDQSQKSLYRDDRKENYGSITSMGYESRDNMELIVKQISDDSESHWVAPEHTERSVPQDPDFAEVSDLKGMVQRWQVNPTVGKSRQNPSQKRDLDAITDISPKQSTHGERGHRCSDCGKFFLQASNFIQHRRIHTGEKPFKCGECGKSYNQRVHLTQHQRVHTGEKPYKCQVCGKAFRVSSHLVQHHSVHSGERPYGCNECGKNFGRHSHLIEHLKRHFREKSQRCSDKRSKNTKLSVKKKISEYSEADMELSGKTQRNVSQVQDFGEGCEFQGKLDRKQGIPMKEILGQPSSKRMNYSEVPYVHKKSSTGERPHKCNECGKSFIQSAHLIQHQRIHTGEKPFRCEECGKSYNQRVHLTQHQRVHTGEKPYTCPLCGKAFRVRSHLVQHQSVHSGERPFKCNECGKGFGRRSHLAGHLRLHSREKSHQCRECGEIFFQYVSLIEHQVLHMGQKNEKNGICEEAYSWNLTVIEDKKIELQEQPYQCDICGKAFGYSSDLIQHYRTHTAEKPYQCDICRENVGQCSHTKQHQKIYSSTKSHQCHECGRGFTLKSHLNQHQRIHTGEKPFQCKECGMNFSWSCSLFKHLRSHERTDPINTLSVEGSLL</sequence>
<protein>
    <recommendedName>
        <fullName>Zinc finger protein with KRAB and SCAN domains 5</fullName>
    </recommendedName>
    <alternativeName>
        <fullName>Zinc finger protein 95 homolog</fullName>
        <shortName>Zfp-95</shortName>
    </alternativeName>
</protein>
<organism>
    <name type="scientific">Homo sapiens</name>
    <name type="common">Human</name>
    <dbReference type="NCBI Taxonomy" id="9606"/>
    <lineage>
        <taxon>Eukaryota</taxon>
        <taxon>Metazoa</taxon>
        <taxon>Chordata</taxon>
        <taxon>Craniata</taxon>
        <taxon>Vertebrata</taxon>
        <taxon>Euteleostomi</taxon>
        <taxon>Mammalia</taxon>
        <taxon>Eutheria</taxon>
        <taxon>Euarchontoglires</taxon>
        <taxon>Primates</taxon>
        <taxon>Haplorrhini</taxon>
        <taxon>Catarrhini</taxon>
        <taxon>Hominidae</taxon>
        <taxon>Homo</taxon>
    </lineage>
</organism>